<organism>
    <name type="scientific">Archaeoglobus fulgidus (strain ATCC 49558 / DSM 4304 / JCM 9628 / NBRC 100126 / VC-16)</name>
    <dbReference type="NCBI Taxonomy" id="224325"/>
    <lineage>
        <taxon>Archaea</taxon>
        <taxon>Methanobacteriati</taxon>
        <taxon>Methanobacteriota</taxon>
        <taxon>Archaeoglobi</taxon>
        <taxon>Archaeoglobales</taxon>
        <taxon>Archaeoglobaceae</taxon>
        <taxon>Archaeoglobus</taxon>
    </lineage>
</organism>
<protein>
    <recommendedName>
        <fullName>Uncharacterized protein AF_1845</fullName>
    </recommendedName>
</protein>
<accession>O28433</accession>
<feature type="signal peptide" evidence="1">
    <location>
        <begin position="1"/>
        <end position="27"/>
    </location>
</feature>
<feature type="chain" id="PRO_0000013672" description="Uncharacterized protein AF_1845">
    <location>
        <begin position="28"/>
        <end position="288"/>
    </location>
</feature>
<feature type="region of interest" description="Disordered" evidence="2">
    <location>
        <begin position="144"/>
        <end position="167"/>
    </location>
</feature>
<keyword id="KW-1185">Reference proteome</keyword>
<keyword id="KW-0732">Signal</keyword>
<gene>
    <name type="ordered locus">AF_1845</name>
</gene>
<evidence type="ECO:0000255" key="1"/>
<evidence type="ECO:0000256" key="2">
    <source>
        <dbReference type="SAM" id="MobiDB-lite"/>
    </source>
</evidence>
<proteinExistence type="inferred from homology"/>
<sequence>MKFEFRTLVLISLAVVVVLSGCSQSPSSGGVPEYSGSKVYSAPTLYSQLIGVPTEGVSVKAYTVENANAKDILSWYKEKLSDYEIVNEMSVVQMTTPQGSAEWGAILFKKGDKGVGIWAMSGSGVEGGGAVYFIVEGPIDKLTGESGEAGGAGEQLPASDQASGEEPVKRYPGSVMLSYYKDTSNPLEVSIGIDYGTEDSAEKVAHWYKQELQAEGWVLESESSDDSSIDLAFSRGKEYIDIYIIEPYEGFLTRKLTSTTGRRGCHLTTWSVERSRWRGIPAQLCWNT</sequence>
<reference key="1">
    <citation type="journal article" date="1997" name="Nature">
        <title>The complete genome sequence of the hyperthermophilic, sulphate-reducing archaeon Archaeoglobus fulgidus.</title>
        <authorList>
            <person name="Klenk H.-P."/>
            <person name="Clayton R.A."/>
            <person name="Tomb J.-F."/>
            <person name="White O."/>
            <person name="Nelson K.E."/>
            <person name="Ketchum K.A."/>
            <person name="Dodson R.J."/>
            <person name="Gwinn M.L."/>
            <person name="Hickey E.K."/>
            <person name="Peterson J.D."/>
            <person name="Richardson D.L."/>
            <person name="Kerlavage A.R."/>
            <person name="Graham D.E."/>
            <person name="Kyrpides N.C."/>
            <person name="Fleischmann R.D."/>
            <person name="Quackenbush J."/>
            <person name="Lee N.H."/>
            <person name="Sutton G.G."/>
            <person name="Gill S.R."/>
            <person name="Kirkness E.F."/>
            <person name="Dougherty B.A."/>
            <person name="McKenney K."/>
            <person name="Adams M.D."/>
            <person name="Loftus B.J."/>
            <person name="Peterson S.N."/>
            <person name="Reich C.I."/>
            <person name="McNeil L.K."/>
            <person name="Badger J.H."/>
            <person name="Glodek A."/>
            <person name="Zhou L."/>
            <person name="Overbeek R."/>
            <person name="Gocayne J.D."/>
            <person name="Weidman J.F."/>
            <person name="McDonald L.A."/>
            <person name="Utterback T.R."/>
            <person name="Cotton M.D."/>
            <person name="Spriggs T."/>
            <person name="Artiach P."/>
            <person name="Kaine B.P."/>
            <person name="Sykes S.M."/>
            <person name="Sadow P.W."/>
            <person name="D'Andrea K.P."/>
            <person name="Bowman C."/>
            <person name="Fujii C."/>
            <person name="Garland S.A."/>
            <person name="Mason T.M."/>
            <person name="Olsen G.J."/>
            <person name="Fraser C.M."/>
            <person name="Smith H.O."/>
            <person name="Woese C.R."/>
            <person name="Venter J.C."/>
        </authorList>
    </citation>
    <scope>NUCLEOTIDE SEQUENCE [LARGE SCALE GENOMIC DNA]</scope>
    <source>
        <strain>ATCC 49558 / DSM 4304 / JCM 9628 / NBRC 100126 / VC-16</strain>
    </source>
</reference>
<dbReference type="EMBL" id="AE000782">
    <property type="protein sequence ID" value="AAB89409.1"/>
    <property type="molecule type" value="Genomic_DNA"/>
</dbReference>
<dbReference type="PIR" id="D69480">
    <property type="entry name" value="D69480"/>
</dbReference>
<dbReference type="RefSeq" id="WP_010879339.1">
    <property type="nucleotide sequence ID" value="NC_000917.1"/>
</dbReference>
<dbReference type="STRING" id="224325.AF_1845"/>
<dbReference type="PaxDb" id="224325-AF_1845"/>
<dbReference type="EnsemblBacteria" id="AAB89409">
    <property type="protein sequence ID" value="AAB89409"/>
    <property type="gene ID" value="AF_1845"/>
</dbReference>
<dbReference type="GeneID" id="1485066"/>
<dbReference type="KEGG" id="afu:AF_1845"/>
<dbReference type="eggNOG" id="arCOG10356">
    <property type="taxonomic scope" value="Archaea"/>
</dbReference>
<dbReference type="HOGENOM" id="CLU_965054_0_0_2"/>
<dbReference type="OrthoDB" id="386486at2157"/>
<dbReference type="Proteomes" id="UP000002199">
    <property type="component" value="Chromosome"/>
</dbReference>
<dbReference type="PROSITE" id="PS51257">
    <property type="entry name" value="PROKAR_LIPOPROTEIN"/>
    <property type="match status" value="1"/>
</dbReference>
<name>Y1845_ARCFU</name>